<evidence type="ECO:0000255" key="1">
    <source>
        <dbReference type="HAMAP-Rule" id="MF_00019"/>
    </source>
</evidence>
<evidence type="ECO:0000256" key="2">
    <source>
        <dbReference type="SAM" id="MobiDB-lite"/>
    </source>
</evidence>
<reference key="1">
    <citation type="journal article" date="2004" name="Nat. Genet.">
        <title>Reductive evolution suggested from the complete genome sequence of a plant-pathogenic phytoplasma.</title>
        <authorList>
            <person name="Oshima K."/>
            <person name="Kakizawa S."/>
            <person name="Nishigawa H."/>
            <person name="Jung H.-Y."/>
            <person name="Wei W."/>
            <person name="Suzuki S."/>
            <person name="Arashida R."/>
            <person name="Nakata D."/>
            <person name="Miyata S."/>
            <person name="Ugaki M."/>
            <person name="Namba S."/>
        </authorList>
    </citation>
    <scope>NUCLEOTIDE SEQUENCE [LARGE SCALE GENOMIC DNA]</scope>
    <source>
        <strain>OY-M</strain>
    </source>
</reference>
<organism>
    <name type="scientific">Onion yellows phytoplasma (strain OY-M)</name>
    <dbReference type="NCBI Taxonomy" id="262768"/>
    <lineage>
        <taxon>Bacteria</taxon>
        <taxon>Bacillati</taxon>
        <taxon>Mycoplasmatota</taxon>
        <taxon>Mollicutes</taxon>
        <taxon>Acholeplasmatales</taxon>
        <taxon>Acholeplasmataceae</taxon>
        <taxon>Candidatus Phytoplasma</taxon>
        <taxon>16SrI (Aster yellows group)</taxon>
    </lineage>
</organism>
<gene>
    <name evidence="1" type="primary">plsX</name>
    <name type="synonym">pam607</name>
    <name type="ordered locus">PAM_607</name>
</gene>
<name>PLSX_ONYPE</name>
<dbReference type="EC" id="2.3.1.274" evidence="1"/>
<dbReference type="EMBL" id="AP006628">
    <property type="protein sequence ID" value="BAD04692.1"/>
    <property type="molecule type" value="Genomic_DNA"/>
</dbReference>
<dbReference type="SMR" id="Q6YPW8"/>
<dbReference type="STRING" id="262768.PAM_607"/>
<dbReference type="KEGG" id="poy:PAM_607"/>
<dbReference type="eggNOG" id="COG0416">
    <property type="taxonomic scope" value="Bacteria"/>
</dbReference>
<dbReference type="HOGENOM" id="CLU_039379_1_1_14"/>
<dbReference type="BioCyc" id="OYEL262768:G1G26-733-MONOMER"/>
<dbReference type="UniPathway" id="UPA00085"/>
<dbReference type="Proteomes" id="UP000002523">
    <property type="component" value="Chromosome"/>
</dbReference>
<dbReference type="GO" id="GO:0005737">
    <property type="term" value="C:cytoplasm"/>
    <property type="evidence" value="ECO:0007669"/>
    <property type="project" value="UniProtKB-SubCell"/>
</dbReference>
<dbReference type="GO" id="GO:0043811">
    <property type="term" value="F:phosphate:acyl-[acyl carrier protein] acyltransferase activity"/>
    <property type="evidence" value="ECO:0007669"/>
    <property type="project" value="UniProtKB-UniRule"/>
</dbReference>
<dbReference type="GO" id="GO:0006633">
    <property type="term" value="P:fatty acid biosynthetic process"/>
    <property type="evidence" value="ECO:0007669"/>
    <property type="project" value="UniProtKB-UniRule"/>
</dbReference>
<dbReference type="GO" id="GO:0008654">
    <property type="term" value="P:phospholipid biosynthetic process"/>
    <property type="evidence" value="ECO:0007669"/>
    <property type="project" value="UniProtKB-KW"/>
</dbReference>
<dbReference type="Gene3D" id="3.40.718.10">
    <property type="entry name" value="Isopropylmalate Dehydrogenase"/>
    <property type="match status" value="1"/>
</dbReference>
<dbReference type="HAMAP" id="MF_00019">
    <property type="entry name" value="PlsX"/>
    <property type="match status" value="1"/>
</dbReference>
<dbReference type="InterPro" id="IPR003664">
    <property type="entry name" value="FA_synthesis"/>
</dbReference>
<dbReference type="InterPro" id="IPR012281">
    <property type="entry name" value="Phospholipid_synth_PlsX-like"/>
</dbReference>
<dbReference type="NCBIfam" id="TIGR00182">
    <property type="entry name" value="plsX"/>
    <property type="match status" value="1"/>
</dbReference>
<dbReference type="PANTHER" id="PTHR30100">
    <property type="entry name" value="FATTY ACID/PHOSPHOLIPID SYNTHESIS PROTEIN PLSX"/>
    <property type="match status" value="1"/>
</dbReference>
<dbReference type="PANTHER" id="PTHR30100:SF1">
    <property type="entry name" value="PHOSPHATE ACYLTRANSFERASE"/>
    <property type="match status" value="1"/>
</dbReference>
<dbReference type="Pfam" id="PF02504">
    <property type="entry name" value="FA_synthesis"/>
    <property type="match status" value="1"/>
</dbReference>
<dbReference type="PIRSF" id="PIRSF002465">
    <property type="entry name" value="Phsphlp_syn_PlsX"/>
    <property type="match status" value="1"/>
</dbReference>
<dbReference type="SUPFAM" id="SSF53659">
    <property type="entry name" value="Isocitrate/Isopropylmalate dehydrogenase-like"/>
    <property type="match status" value="1"/>
</dbReference>
<feature type="chain" id="PRO_1000201894" description="Phosphate acyltransferase">
    <location>
        <begin position="1"/>
        <end position="366"/>
    </location>
</feature>
<feature type="region of interest" description="Disordered" evidence="2">
    <location>
        <begin position="334"/>
        <end position="366"/>
    </location>
</feature>
<feature type="compositionally biased region" description="Polar residues" evidence="2">
    <location>
        <begin position="343"/>
        <end position="366"/>
    </location>
</feature>
<sequence>MIKIAIDVMGGDFAPLEIVKGTLLALNKNKEIHVVLYGNQKLITPLIEKTPFFGNNQITIKHTPYFLRSADKNIRDQLKATPNASLFLALEAAKQDEVQGVVSAGATQTLVLASHLILKKMPLMQRIAIAPMFNSFDNRTRILLDAGANTELKPQHLHTFANYATIIAKEILEIPNPQIKLLNIGTEPTKGRALELETYQLLSQDSNLNFGGNEEPQNLLTTSADILLSDGFTANIALKTYEGTMLNFMNHFKTILTKNLIKKMATKTLFQKPLQQLKNQLDPRQIGGAMLLGLNKIVIKAHGSSQAYAFCQAILQAQKLIKAQVNQKIAHSLESAKNKETQSKQASTKNTAPKTSETTKESQQSL</sequence>
<accession>Q6YPW8</accession>
<comment type="function">
    <text evidence="1">Catalyzes the reversible formation of acyl-phosphate (acyl-PO(4)) from acyl-[acyl-carrier-protein] (acyl-ACP). This enzyme utilizes acyl-ACP as fatty acyl donor, but not acyl-CoA.</text>
</comment>
<comment type="catalytic activity">
    <reaction evidence="1">
        <text>a fatty acyl-[ACP] + phosphate = an acyl phosphate + holo-[ACP]</text>
        <dbReference type="Rhea" id="RHEA:42292"/>
        <dbReference type="Rhea" id="RHEA-COMP:9685"/>
        <dbReference type="Rhea" id="RHEA-COMP:14125"/>
        <dbReference type="ChEBI" id="CHEBI:43474"/>
        <dbReference type="ChEBI" id="CHEBI:59918"/>
        <dbReference type="ChEBI" id="CHEBI:64479"/>
        <dbReference type="ChEBI" id="CHEBI:138651"/>
        <dbReference type="EC" id="2.3.1.274"/>
    </reaction>
</comment>
<comment type="pathway">
    <text evidence="1">Lipid metabolism; phospholipid metabolism.</text>
</comment>
<comment type="subunit">
    <text evidence="1">Homodimer. Probably interacts with PlsY.</text>
</comment>
<comment type="subcellular location">
    <subcellularLocation>
        <location evidence="1">Cytoplasm</location>
    </subcellularLocation>
    <text evidence="1">Associated with the membrane possibly through PlsY.</text>
</comment>
<comment type="similarity">
    <text evidence="1">Belongs to the PlsX family.</text>
</comment>
<protein>
    <recommendedName>
        <fullName evidence="1">Phosphate acyltransferase</fullName>
        <ecNumber evidence="1">2.3.1.274</ecNumber>
    </recommendedName>
    <alternativeName>
        <fullName evidence="1">Acyl-ACP phosphotransacylase</fullName>
    </alternativeName>
    <alternativeName>
        <fullName evidence="1">Acyl-[acyl-carrier-protein]--phosphate acyltransferase</fullName>
    </alternativeName>
    <alternativeName>
        <fullName evidence="1">Phosphate-acyl-ACP acyltransferase</fullName>
    </alternativeName>
</protein>
<keyword id="KW-0963">Cytoplasm</keyword>
<keyword id="KW-0444">Lipid biosynthesis</keyword>
<keyword id="KW-0443">Lipid metabolism</keyword>
<keyword id="KW-0594">Phospholipid biosynthesis</keyword>
<keyword id="KW-1208">Phospholipid metabolism</keyword>
<keyword id="KW-0808">Transferase</keyword>
<proteinExistence type="inferred from homology"/>